<evidence type="ECO:0000255" key="1">
    <source>
        <dbReference type="HAMAP-Rule" id="MF_01152"/>
    </source>
</evidence>
<organism>
    <name type="scientific">Leifsonia xyli subsp. xyli (strain CTCB07)</name>
    <dbReference type="NCBI Taxonomy" id="281090"/>
    <lineage>
        <taxon>Bacteria</taxon>
        <taxon>Bacillati</taxon>
        <taxon>Actinomycetota</taxon>
        <taxon>Actinomycetes</taxon>
        <taxon>Micrococcales</taxon>
        <taxon>Microbacteriaceae</taxon>
        <taxon>Leifsonia</taxon>
    </lineage>
</organism>
<comment type="function">
    <text evidence="1">Participates actively in the response to hyperosmotic and heat shock by preventing the aggregation of stress-denatured proteins and by disaggregating proteins, also in an autonomous, DnaK-independent fashion. Unfolded proteins bind initially to DnaJ; upon interaction with the DnaJ-bound protein, DnaK hydrolyzes its bound ATP, resulting in the formation of a stable complex. GrpE releases ADP from DnaK; ATP binding to DnaK triggers the release of the substrate protein, thus completing the reaction cycle. Several rounds of ATP-dependent interactions between DnaJ, DnaK and GrpE are required for fully efficient folding. Also involved, together with DnaK and GrpE, in the DNA replication of plasmids through activation of initiation proteins.</text>
</comment>
<comment type="cofactor">
    <cofactor evidence="1">
        <name>Zn(2+)</name>
        <dbReference type="ChEBI" id="CHEBI:29105"/>
    </cofactor>
    <text evidence="1">Binds 2 Zn(2+) ions per monomer.</text>
</comment>
<comment type="subunit">
    <text evidence="1">Homodimer.</text>
</comment>
<comment type="subcellular location">
    <subcellularLocation>
        <location evidence="1">Cytoplasm</location>
    </subcellularLocation>
</comment>
<comment type="domain">
    <text evidence="1">The J domain is necessary and sufficient to stimulate DnaK ATPase activity. Zinc center 1 plays an important role in the autonomous, DnaK-independent chaperone activity of DnaJ. Zinc center 2 is essential for interaction with DnaK and for DnaJ activity.</text>
</comment>
<comment type="similarity">
    <text evidence="1">Belongs to the DnaJ family.</text>
</comment>
<reference key="1">
    <citation type="journal article" date="2004" name="Mol. Plant Microbe Interact.">
        <title>The genome sequence of the Gram-positive sugarcane pathogen Leifsonia xyli subsp. xyli.</title>
        <authorList>
            <person name="Monteiro-Vitorello C.B."/>
            <person name="Camargo L.E.A."/>
            <person name="Van Sluys M.A."/>
            <person name="Kitajima J.P."/>
            <person name="Truffi D."/>
            <person name="do Amaral A.M."/>
            <person name="Harakava R."/>
            <person name="de Oliveira J.C.F."/>
            <person name="Wood D."/>
            <person name="de Oliveira M.C."/>
            <person name="Miyaki C.Y."/>
            <person name="Takita M.A."/>
            <person name="da Silva A.C.R."/>
            <person name="Furlan L.R."/>
            <person name="Carraro D.M."/>
            <person name="Camarotte G."/>
            <person name="Almeida N.F. Jr."/>
            <person name="Carrer H."/>
            <person name="Coutinho L.L."/>
            <person name="El-Dorry H.A."/>
            <person name="Ferro M.I.T."/>
            <person name="Gagliardi P.R."/>
            <person name="Giglioti E."/>
            <person name="Goldman M.H.S."/>
            <person name="Goldman G.H."/>
            <person name="Kimura E.T."/>
            <person name="Ferro E.S."/>
            <person name="Kuramae E.E."/>
            <person name="Lemos E.G.M."/>
            <person name="Lemos M.V.F."/>
            <person name="Mauro S.M.Z."/>
            <person name="Machado M.A."/>
            <person name="Marino C.L."/>
            <person name="Menck C.F."/>
            <person name="Nunes L.R."/>
            <person name="Oliveira R.C."/>
            <person name="Pereira G.G."/>
            <person name="Siqueira W."/>
            <person name="de Souza A.A."/>
            <person name="Tsai S.M."/>
            <person name="Zanca A.S."/>
            <person name="Simpson A.J.G."/>
            <person name="Brumbley S.M."/>
            <person name="Setubal J.C."/>
        </authorList>
    </citation>
    <scope>NUCLEOTIDE SEQUENCE [LARGE SCALE GENOMIC DNA]</scope>
    <source>
        <strain>CTCB07</strain>
    </source>
</reference>
<sequence length="369" mass="39646">MADHYEVLGVERNATPDEIKKAYRRLARELHPDVNPSTEAQERFKLVTHAYDVLSDPQQRQQYDRGGASGFGGGGGADFSGFGDIFETFFGGGGASRGPRSRRERGQDALLRVEVDLDEVVFGAHRDLEVDTAIVCETCDGSCCQPGTAPVPCDICHGTGSIQRSVRSLLGNVMTSSPCGSCRGYGTVIATPCVTCQGQGRVRARRTVPVDIPAGVDTGLRLQMPGSGEAGPAGGPNGDLYLEIKVKHHDVFSRDGDDLLCTLEVSMADAILGAAATIKALDGDIRLELKPGTQSADIVSVKDRGITHLRCSGRGDLRVGIQVVTPTKLDHREKELIKKFAESHKASEPSLARFQQGLFAKLRDRFLNV</sequence>
<gene>
    <name evidence="1" type="primary">dnaJ</name>
    <name type="ordered locus">Lxx14640</name>
</gene>
<dbReference type="EMBL" id="AE016822">
    <property type="protein sequence ID" value="AAT89276.1"/>
    <property type="molecule type" value="Genomic_DNA"/>
</dbReference>
<dbReference type="RefSeq" id="WP_011186267.1">
    <property type="nucleotide sequence ID" value="NC_006087.1"/>
</dbReference>
<dbReference type="SMR" id="Q6AEC0"/>
<dbReference type="STRING" id="281090.Lxx14640"/>
<dbReference type="KEGG" id="lxx:Lxx14640"/>
<dbReference type="eggNOG" id="COG0484">
    <property type="taxonomic scope" value="Bacteria"/>
</dbReference>
<dbReference type="HOGENOM" id="CLU_017633_0_1_11"/>
<dbReference type="Proteomes" id="UP000001306">
    <property type="component" value="Chromosome"/>
</dbReference>
<dbReference type="GO" id="GO:0005737">
    <property type="term" value="C:cytoplasm"/>
    <property type="evidence" value="ECO:0007669"/>
    <property type="project" value="UniProtKB-SubCell"/>
</dbReference>
<dbReference type="GO" id="GO:0005524">
    <property type="term" value="F:ATP binding"/>
    <property type="evidence" value="ECO:0007669"/>
    <property type="project" value="InterPro"/>
</dbReference>
<dbReference type="GO" id="GO:0031072">
    <property type="term" value="F:heat shock protein binding"/>
    <property type="evidence" value="ECO:0007669"/>
    <property type="project" value="InterPro"/>
</dbReference>
<dbReference type="GO" id="GO:0051082">
    <property type="term" value="F:unfolded protein binding"/>
    <property type="evidence" value="ECO:0007669"/>
    <property type="project" value="UniProtKB-UniRule"/>
</dbReference>
<dbReference type="GO" id="GO:0008270">
    <property type="term" value="F:zinc ion binding"/>
    <property type="evidence" value="ECO:0007669"/>
    <property type="project" value="UniProtKB-UniRule"/>
</dbReference>
<dbReference type="GO" id="GO:0051085">
    <property type="term" value="P:chaperone cofactor-dependent protein refolding"/>
    <property type="evidence" value="ECO:0007669"/>
    <property type="project" value="TreeGrafter"/>
</dbReference>
<dbReference type="GO" id="GO:0006260">
    <property type="term" value="P:DNA replication"/>
    <property type="evidence" value="ECO:0007669"/>
    <property type="project" value="UniProtKB-KW"/>
</dbReference>
<dbReference type="GO" id="GO:0042026">
    <property type="term" value="P:protein refolding"/>
    <property type="evidence" value="ECO:0007669"/>
    <property type="project" value="TreeGrafter"/>
</dbReference>
<dbReference type="GO" id="GO:0009408">
    <property type="term" value="P:response to heat"/>
    <property type="evidence" value="ECO:0007669"/>
    <property type="project" value="InterPro"/>
</dbReference>
<dbReference type="CDD" id="cd06257">
    <property type="entry name" value="DnaJ"/>
    <property type="match status" value="1"/>
</dbReference>
<dbReference type="CDD" id="cd10747">
    <property type="entry name" value="DnaJ_C"/>
    <property type="match status" value="1"/>
</dbReference>
<dbReference type="CDD" id="cd10719">
    <property type="entry name" value="DnaJ_zf"/>
    <property type="match status" value="1"/>
</dbReference>
<dbReference type="FunFam" id="2.60.260.20:FF:000005">
    <property type="entry name" value="Chaperone protein dnaJ 1, mitochondrial"/>
    <property type="match status" value="1"/>
</dbReference>
<dbReference type="FunFam" id="2.10.230.10:FF:000002">
    <property type="entry name" value="Molecular chaperone DnaJ"/>
    <property type="match status" value="1"/>
</dbReference>
<dbReference type="Gene3D" id="1.10.287.110">
    <property type="entry name" value="DnaJ domain"/>
    <property type="match status" value="1"/>
</dbReference>
<dbReference type="Gene3D" id="2.10.230.10">
    <property type="entry name" value="Heat shock protein DnaJ, cysteine-rich domain"/>
    <property type="match status" value="1"/>
</dbReference>
<dbReference type="Gene3D" id="2.60.260.20">
    <property type="entry name" value="Urease metallochaperone UreE, N-terminal domain"/>
    <property type="match status" value="2"/>
</dbReference>
<dbReference type="HAMAP" id="MF_01152">
    <property type="entry name" value="DnaJ"/>
    <property type="match status" value="1"/>
</dbReference>
<dbReference type="InterPro" id="IPR012724">
    <property type="entry name" value="DnaJ"/>
</dbReference>
<dbReference type="InterPro" id="IPR002939">
    <property type="entry name" value="DnaJ_C"/>
</dbReference>
<dbReference type="InterPro" id="IPR001623">
    <property type="entry name" value="DnaJ_domain"/>
</dbReference>
<dbReference type="InterPro" id="IPR018253">
    <property type="entry name" value="DnaJ_domain_CS"/>
</dbReference>
<dbReference type="InterPro" id="IPR008971">
    <property type="entry name" value="HSP40/DnaJ_pept-bd"/>
</dbReference>
<dbReference type="InterPro" id="IPR001305">
    <property type="entry name" value="HSP_DnaJ_Cys-rich_dom"/>
</dbReference>
<dbReference type="InterPro" id="IPR036410">
    <property type="entry name" value="HSP_DnaJ_Cys-rich_dom_sf"/>
</dbReference>
<dbReference type="InterPro" id="IPR036869">
    <property type="entry name" value="J_dom_sf"/>
</dbReference>
<dbReference type="NCBIfam" id="TIGR02349">
    <property type="entry name" value="DnaJ_bact"/>
    <property type="match status" value="1"/>
</dbReference>
<dbReference type="NCBIfam" id="NF008035">
    <property type="entry name" value="PRK10767.1"/>
    <property type="match status" value="1"/>
</dbReference>
<dbReference type="PANTHER" id="PTHR43096:SF48">
    <property type="entry name" value="CHAPERONE PROTEIN DNAJ"/>
    <property type="match status" value="1"/>
</dbReference>
<dbReference type="PANTHER" id="PTHR43096">
    <property type="entry name" value="DNAJ HOMOLOG 1, MITOCHONDRIAL-RELATED"/>
    <property type="match status" value="1"/>
</dbReference>
<dbReference type="Pfam" id="PF00226">
    <property type="entry name" value="DnaJ"/>
    <property type="match status" value="1"/>
</dbReference>
<dbReference type="Pfam" id="PF01556">
    <property type="entry name" value="DnaJ_C"/>
    <property type="match status" value="1"/>
</dbReference>
<dbReference type="Pfam" id="PF00684">
    <property type="entry name" value="DnaJ_CXXCXGXG"/>
    <property type="match status" value="1"/>
</dbReference>
<dbReference type="PRINTS" id="PR00625">
    <property type="entry name" value="JDOMAIN"/>
</dbReference>
<dbReference type="SMART" id="SM00271">
    <property type="entry name" value="DnaJ"/>
    <property type="match status" value="1"/>
</dbReference>
<dbReference type="SUPFAM" id="SSF46565">
    <property type="entry name" value="Chaperone J-domain"/>
    <property type="match status" value="1"/>
</dbReference>
<dbReference type="SUPFAM" id="SSF57938">
    <property type="entry name" value="DnaJ/Hsp40 cysteine-rich domain"/>
    <property type="match status" value="1"/>
</dbReference>
<dbReference type="SUPFAM" id="SSF49493">
    <property type="entry name" value="HSP40/DnaJ peptide-binding domain"/>
    <property type="match status" value="2"/>
</dbReference>
<dbReference type="PROSITE" id="PS00636">
    <property type="entry name" value="DNAJ_1"/>
    <property type="match status" value="1"/>
</dbReference>
<dbReference type="PROSITE" id="PS50076">
    <property type="entry name" value="DNAJ_2"/>
    <property type="match status" value="1"/>
</dbReference>
<dbReference type="PROSITE" id="PS51188">
    <property type="entry name" value="ZF_CR"/>
    <property type="match status" value="1"/>
</dbReference>
<proteinExistence type="inferred from homology"/>
<name>DNAJ_LEIXX</name>
<accession>Q6AEC0</accession>
<keyword id="KW-0143">Chaperone</keyword>
<keyword id="KW-0963">Cytoplasm</keyword>
<keyword id="KW-0235">DNA replication</keyword>
<keyword id="KW-0479">Metal-binding</keyword>
<keyword id="KW-1185">Reference proteome</keyword>
<keyword id="KW-0677">Repeat</keyword>
<keyword id="KW-0346">Stress response</keyword>
<keyword id="KW-0862">Zinc</keyword>
<keyword id="KW-0863">Zinc-finger</keyword>
<feature type="chain" id="PRO_0000070810" description="Chaperone protein DnaJ">
    <location>
        <begin position="1"/>
        <end position="369"/>
    </location>
</feature>
<feature type="domain" description="J" evidence="1">
    <location>
        <begin position="3"/>
        <end position="67"/>
    </location>
</feature>
<feature type="repeat" description="CXXCXGXG motif">
    <location>
        <begin position="136"/>
        <end position="143"/>
    </location>
</feature>
<feature type="repeat" description="CXXCXGXG motif">
    <location>
        <begin position="153"/>
        <end position="160"/>
    </location>
</feature>
<feature type="repeat" description="CXXCXGXG motif">
    <location>
        <begin position="179"/>
        <end position="186"/>
    </location>
</feature>
<feature type="repeat" description="CXXCXGXG motif">
    <location>
        <begin position="193"/>
        <end position="200"/>
    </location>
</feature>
<feature type="zinc finger region" description="CR-type" evidence="1">
    <location>
        <begin position="123"/>
        <end position="205"/>
    </location>
</feature>
<feature type="binding site" evidence="1">
    <location>
        <position position="136"/>
    </location>
    <ligand>
        <name>Zn(2+)</name>
        <dbReference type="ChEBI" id="CHEBI:29105"/>
        <label>1</label>
    </ligand>
</feature>
<feature type="binding site" evidence="1">
    <location>
        <position position="139"/>
    </location>
    <ligand>
        <name>Zn(2+)</name>
        <dbReference type="ChEBI" id="CHEBI:29105"/>
        <label>1</label>
    </ligand>
</feature>
<feature type="binding site" evidence="1">
    <location>
        <position position="153"/>
    </location>
    <ligand>
        <name>Zn(2+)</name>
        <dbReference type="ChEBI" id="CHEBI:29105"/>
        <label>2</label>
    </ligand>
</feature>
<feature type="binding site" evidence="1">
    <location>
        <position position="156"/>
    </location>
    <ligand>
        <name>Zn(2+)</name>
        <dbReference type="ChEBI" id="CHEBI:29105"/>
        <label>2</label>
    </ligand>
</feature>
<feature type="binding site" evidence="1">
    <location>
        <position position="179"/>
    </location>
    <ligand>
        <name>Zn(2+)</name>
        <dbReference type="ChEBI" id="CHEBI:29105"/>
        <label>2</label>
    </ligand>
</feature>
<feature type="binding site" evidence="1">
    <location>
        <position position="182"/>
    </location>
    <ligand>
        <name>Zn(2+)</name>
        <dbReference type="ChEBI" id="CHEBI:29105"/>
        <label>2</label>
    </ligand>
</feature>
<feature type="binding site" evidence="1">
    <location>
        <position position="193"/>
    </location>
    <ligand>
        <name>Zn(2+)</name>
        <dbReference type="ChEBI" id="CHEBI:29105"/>
        <label>1</label>
    </ligand>
</feature>
<feature type="binding site" evidence="1">
    <location>
        <position position="196"/>
    </location>
    <ligand>
        <name>Zn(2+)</name>
        <dbReference type="ChEBI" id="CHEBI:29105"/>
        <label>1</label>
    </ligand>
</feature>
<protein>
    <recommendedName>
        <fullName evidence="1">Chaperone protein DnaJ</fullName>
    </recommendedName>
</protein>